<keyword id="KW-0002">3D-structure</keyword>
<keyword id="KW-0013">ADP-ribosylation</keyword>
<keyword id="KW-0966">Cell projection</keyword>
<keyword id="KW-0342">GTP-binding</keyword>
<keyword id="KW-0449">Lipoprotein</keyword>
<keyword id="KW-0460">Magnesium</keyword>
<keyword id="KW-0479">Metal-binding</keyword>
<keyword id="KW-0519">Myristate</keyword>
<keyword id="KW-0547">Nucleotide-binding</keyword>
<keyword id="KW-1267">Proteomics identification</keyword>
<keyword id="KW-1185">Reference proteome</keyword>
<keyword id="KW-0716">Sensory transduction</keyword>
<keyword id="KW-0807">Transducer</keyword>
<keyword id="KW-0844">Vision</keyword>
<proteinExistence type="evidence at protein level"/>
<sequence>MGSGASAEDKELAKRSKELEKKLQEDADKEAKTVKLLLLGAGESGKSTIVKQMKIIHQDGYSPEECLEFKAIIYGNVLQSILAIIRAMTTLGIDYAEPSCADDGRQLNNLADSIEEGTMPPELVEVIRRLWKDGGVQACFERAAEYQLNDSASYYLNQLERITDPEYLPSEQDVLRSRVKTTGIIETKFSVKDLNFRMFDVGGQRSERKKWIHCFEGVTCIIFCAALSAYDMVLVEDDEVNRMHESLHLFNSICNHKFFAATSIVLFLNKKDLFEEKIKKVHLSICFPEYDGNNSYDDAGNYIKSQFLDLNMRKDVKEIYSHMTCATDTQNVKFVFDAVTDIIIKENLKDCGLF</sequence>
<feature type="initiator methionine" description="Removed">
    <location>
        <position position="1"/>
    </location>
</feature>
<feature type="chain" id="PRO_0000203740" description="Guanine nucleotide-binding protein G(t) subunit alpha-2">
    <location>
        <begin position="2"/>
        <end position="354"/>
    </location>
</feature>
<feature type="domain" description="G-alpha" evidence="3">
    <location>
        <begin position="32"/>
        <end position="354"/>
    </location>
</feature>
<feature type="region of interest" description="Disordered" evidence="4">
    <location>
        <begin position="1"/>
        <end position="27"/>
    </location>
</feature>
<feature type="region of interest" description="G1 motif" evidence="3">
    <location>
        <begin position="35"/>
        <end position="48"/>
    </location>
</feature>
<feature type="region of interest" description="G2 motif" evidence="3">
    <location>
        <begin position="173"/>
        <end position="181"/>
    </location>
</feature>
<feature type="region of interest" description="G3 motif" evidence="3">
    <location>
        <begin position="196"/>
        <end position="205"/>
    </location>
</feature>
<feature type="region of interest" description="G4 motif" evidence="3">
    <location>
        <begin position="265"/>
        <end position="272"/>
    </location>
</feature>
<feature type="region of interest" description="G5 motif" evidence="3">
    <location>
        <begin position="324"/>
        <end position="329"/>
    </location>
</feature>
<feature type="compositionally biased region" description="Basic and acidic residues" evidence="4">
    <location>
        <begin position="7"/>
        <end position="27"/>
    </location>
</feature>
<feature type="binding site" evidence="1">
    <location>
        <begin position="40"/>
        <end position="47"/>
    </location>
    <ligand>
        <name>GTP</name>
        <dbReference type="ChEBI" id="CHEBI:37565"/>
    </ligand>
</feature>
<feature type="binding site" evidence="1">
    <location>
        <position position="47"/>
    </location>
    <ligand>
        <name>Mg(2+)</name>
        <dbReference type="ChEBI" id="CHEBI:18420"/>
    </ligand>
</feature>
<feature type="binding site" evidence="1">
    <location>
        <begin position="175"/>
        <end position="181"/>
    </location>
    <ligand>
        <name>GTP</name>
        <dbReference type="ChEBI" id="CHEBI:37565"/>
    </ligand>
</feature>
<feature type="binding site" evidence="1">
    <location>
        <position position="181"/>
    </location>
    <ligand>
        <name>Mg(2+)</name>
        <dbReference type="ChEBI" id="CHEBI:18420"/>
    </ligand>
</feature>
<feature type="binding site" evidence="1">
    <location>
        <begin position="200"/>
        <end position="204"/>
    </location>
    <ligand>
        <name>GTP</name>
        <dbReference type="ChEBI" id="CHEBI:37565"/>
    </ligand>
</feature>
<feature type="binding site" evidence="1">
    <location>
        <begin position="269"/>
        <end position="272"/>
    </location>
    <ligand>
        <name>GTP</name>
        <dbReference type="ChEBI" id="CHEBI:37565"/>
    </ligand>
</feature>
<feature type="binding site" evidence="1">
    <location>
        <position position="326"/>
    </location>
    <ligand>
        <name>GTP</name>
        <dbReference type="ChEBI" id="CHEBI:37565"/>
    </ligand>
</feature>
<feature type="modified residue" description="ADP-ribosylarginine; by cholera toxin" evidence="1">
    <location>
        <position position="178"/>
    </location>
</feature>
<feature type="modified residue" description="ADP-ribosylcysteine; by pertussis toxin" evidence="1">
    <location>
        <position position="351"/>
    </location>
</feature>
<feature type="lipid moiety-binding region" description="N-myristoyl glycine" evidence="1">
    <location>
        <position position="2"/>
    </location>
</feature>
<feature type="sequence variant" id="VAR_047623" description="In dbSNP:rs3738766." evidence="6">
    <original>L</original>
    <variation>I</variation>
    <location>
        <position position="107"/>
    </location>
</feature>
<feature type="sequence variant" id="VAR_047624" description="In dbSNP:rs41280330." evidence="6">
    <original>V</original>
    <variation>M</variation>
    <location>
        <position position="124"/>
    </location>
</feature>
<feature type="sequence variant" id="VAR_014783" description="In dbSNP:rs1799940.">
    <original>G</original>
    <variation>D</variation>
    <location>
        <position position="183"/>
    </location>
</feature>
<feature type="sequence conflict" description="In Ref. 1." evidence="7" ref="1">
    <original>QL</original>
    <variation>HV</variation>
    <location>
        <begin position="106"/>
        <end position="107"/>
    </location>
</feature>
<feature type="helix" evidence="8">
    <location>
        <begin position="339"/>
        <end position="349"/>
    </location>
</feature>
<comment type="function">
    <text>Guanine nucleotide-binding proteins (G proteins) are involved as modulators or transducers in various transmembrane signaling systems. Transducin is an amplifier and one of the transducers of a visual impulse that performs the coupling between rhodopsin and cGMP-phosphodiesterase.</text>
</comment>
<comment type="subunit">
    <text>G proteins are composed of 3 units; alpha, beta and gamma. The alpha chain contains the guanine nucleotide binding site.</text>
</comment>
<comment type="subcellular location">
    <subcellularLocation>
        <location evidence="2">Cell projection</location>
        <location evidence="2">Cilium</location>
        <location evidence="2">Photoreceptor outer segment</location>
    </subcellularLocation>
    <subcellularLocation>
        <location evidence="2">Photoreceptor inner segment</location>
    </subcellularLocation>
    <text evidence="2">Localizes mainly in the outer segment in the dark-adapted state, whereas is translocated to the inner part of the photoreceptors in the light-adapted state. During dark-adapted conditions, in the presence of UNC119 mislocalizes from the outer segment to the inner part of rod photoreceptors which leads to decreased photoreceptor damage caused by light.</text>
</comment>
<comment type="tissue specificity">
    <text>Retinal rod outer segment.</text>
</comment>
<comment type="disease" evidence="5">
    <disease id="DI-01166">
        <name>Achromatopsia 4</name>
        <acronym>ACHM4</acronym>
        <description>An ocular stationary disorder due to the absence of functioning cone photoreceptors in the retina. It is characterized by total colorblindness, low visual acuity, photophobia and nystagmus.</description>
        <dbReference type="MIM" id="613856"/>
    </disease>
    <text>The disease is caused by variants affecting the gene represented in this entry.</text>
</comment>
<comment type="similarity">
    <text evidence="7">Belongs to the G-alpha family. G(i/o/t/z) subfamily.</text>
</comment>
<organism>
    <name type="scientific">Homo sapiens</name>
    <name type="common">Human</name>
    <dbReference type="NCBI Taxonomy" id="9606"/>
    <lineage>
        <taxon>Eukaryota</taxon>
        <taxon>Metazoa</taxon>
        <taxon>Chordata</taxon>
        <taxon>Craniata</taxon>
        <taxon>Vertebrata</taxon>
        <taxon>Euteleostomi</taxon>
        <taxon>Mammalia</taxon>
        <taxon>Eutheria</taxon>
        <taxon>Euarchontoglires</taxon>
        <taxon>Primates</taxon>
        <taxon>Haplorrhini</taxon>
        <taxon>Catarrhini</taxon>
        <taxon>Hominidae</taxon>
        <taxon>Homo</taxon>
    </lineage>
</organism>
<protein>
    <recommendedName>
        <fullName>Guanine nucleotide-binding protein G(t) subunit alpha-2</fullName>
    </recommendedName>
    <alternativeName>
        <fullName>Transducin alpha-2 chain</fullName>
    </alternativeName>
</protein>
<evidence type="ECO:0000250" key="1"/>
<evidence type="ECO:0000250" key="2">
    <source>
        <dbReference type="UniProtKB" id="P50149"/>
    </source>
</evidence>
<evidence type="ECO:0000255" key="3">
    <source>
        <dbReference type="PROSITE-ProRule" id="PRU01230"/>
    </source>
</evidence>
<evidence type="ECO:0000256" key="4">
    <source>
        <dbReference type="SAM" id="MobiDB-lite"/>
    </source>
</evidence>
<evidence type="ECO:0000269" key="5">
    <source>
    </source>
</evidence>
<evidence type="ECO:0000269" key="6">
    <source>
    </source>
</evidence>
<evidence type="ECO:0000305" key="7"/>
<evidence type="ECO:0007829" key="8">
    <source>
        <dbReference type="PDB" id="6N85"/>
    </source>
</evidence>
<name>GNAT2_HUMAN</name>
<gene>
    <name type="primary">GNAT2</name>
    <name type="synonym">GNATC</name>
</gene>
<dbReference type="EMBL" id="D10384">
    <property type="protein sequence ID" value="BAA01211.1"/>
    <property type="molecule type" value="Genomic_DNA"/>
</dbReference>
<dbReference type="EMBL" id="Z18859">
    <property type="protein sequence ID" value="CAA79310.1"/>
    <property type="molecule type" value="Genomic_DNA"/>
</dbReference>
<dbReference type="EMBL" id="AF493909">
    <property type="protein sequence ID" value="AAM12623.1"/>
    <property type="molecule type" value="mRNA"/>
</dbReference>
<dbReference type="EMBL" id="BC000233">
    <property type="protein sequence ID" value="AAH00233.1"/>
    <property type="molecule type" value="mRNA"/>
</dbReference>
<dbReference type="CCDS" id="CCDS803.1"/>
<dbReference type="PIR" id="A47219">
    <property type="entry name" value="RGHUT2"/>
</dbReference>
<dbReference type="RefSeq" id="NP_001364224.1">
    <property type="nucleotide sequence ID" value="NM_001377295.2"/>
</dbReference>
<dbReference type="RefSeq" id="NP_001366161.1">
    <property type="nucleotide sequence ID" value="NM_001379232.1"/>
</dbReference>
<dbReference type="RefSeq" id="NP_005263.1">
    <property type="nucleotide sequence ID" value="NM_005272.5"/>
</dbReference>
<dbReference type="RefSeq" id="XP_011539566.1">
    <property type="nucleotide sequence ID" value="XM_011541264.2"/>
</dbReference>
<dbReference type="PDB" id="6N84">
    <property type="method" value="X-ray"/>
    <property type="resolution" value="1.75 A"/>
    <property type="chains" value="A=331-354"/>
</dbReference>
<dbReference type="PDB" id="6N85">
    <property type="method" value="X-ray"/>
    <property type="resolution" value="2.50 A"/>
    <property type="chains" value="M=331-354"/>
</dbReference>
<dbReference type="PDBsum" id="6N84"/>
<dbReference type="PDBsum" id="6N85"/>
<dbReference type="SMR" id="P19087"/>
<dbReference type="BioGRID" id="109042">
    <property type="interactions" value="23"/>
</dbReference>
<dbReference type="FunCoup" id="P19087">
    <property type="interactions" value="138"/>
</dbReference>
<dbReference type="IntAct" id="P19087">
    <property type="interactions" value="12"/>
</dbReference>
<dbReference type="STRING" id="9606.ENSP00000251337"/>
<dbReference type="iPTMnet" id="P19087"/>
<dbReference type="PhosphoSitePlus" id="P19087"/>
<dbReference type="SwissPalm" id="P19087"/>
<dbReference type="BioMuta" id="GNAT2"/>
<dbReference type="DMDM" id="232151"/>
<dbReference type="jPOST" id="P19087"/>
<dbReference type="MassIVE" id="P19087"/>
<dbReference type="PaxDb" id="9606-ENSP00000251337"/>
<dbReference type="PeptideAtlas" id="P19087"/>
<dbReference type="ProteomicsDB" id="53631"/>
<dbReference type="Antibodypedia" id="33764">
    <property type="antibodies" value="173 antibodies from 26 providers"/>
</dbReference>
<dbReference type="DNASU" id="2780"/>
<dbReference type="Ensembl" id="ENST00000351050.8">
    <property type="protein sequence ID" value="ENSP00000251337.3"/>
    <property type="gene ID" value="ENSG00000134183.13"/>
</dbReference>
<dbReference type="Ensembl" id="ENST00000679935.1">
    <property type="protein sequence ID" value="ENSP00000505083.1"/>
    <property type="gene ID" value="ENSG00000134183.13"/>
</dbReference>
<dbReference type="GeneID" id="2780"/>
<dbReference type="KEGG" id="hsa:2780"/>
<dbReference type="MANE-Select" id="ENST00000679935.1">
    <property type="protein sequence ID" value="ENSP00000505083.1"/>
    <property type="RefSeq nucleotide sequence ID" value="NM_001377295.2"/>
    <property type="RefSeq protein sequence ID" value="NP_001364224.1"/>
</dbReference>
<dbReference type="AGR" id="HGNC:4394"/>
<dbReference type="CTD" id="2780"/>
<dbReference type="DisGeNET" id="2780"/>
<dbReference type="GeneCards" id="GNAT2"/>
<dbReference type="GeneReviews" id="GNAT2"/>
<dbReference type="HGNC" id="HGNC:4394">
    <property type="gene designation" value="GNAT2"/>
</dbReference>
<dbReference type="HPA" id="ENSG00000134183">
    <property type="expression patterns" value="Tissue enriched (retina)"/>
</dbReference>
<dbReference type="MalaCards" id="GNAT2"/>
<dbReference type="MIM" id="139340">
    <property type="type" value="gene"/>
</dbReference>
<dbReference type="MIM" id="613856">
    <property type="type" value="phenotype"/>
</dbReference>
<dbReference type="neXtProt" id="NX_P19087"/>
<dbReference type="OpenTargets" id="ENSG00000134183"/>
<dbReference type="Orphanet" id="49382">
    <property type="disease" value="Achromatopsia"/>
</dbReference>
<dbReference type="Orphanet" id="1871">
    <property type="disease" value="Progressive cone dystrophy"/>
</dbReference>
<dbReference type="PharmGKB" id="PA28774"/>
<dbReference type="VEuPathDB" id="HostDB:ENSG00000134183"/>
<dbReference type="eggNOG" id="KOG0082">
    <property type="taxonomic scope" value="Eukaryota"/>
</dbReference>
<dbReference type="GeneTree" id="ENSGT00940000158399"/>
<dbReference type="HOGENOM" id="CLU_014184_6_0_1"/>
<dbReference type="InParanoid" id="P19087"/>
<dbReference type="OMA" id="ICKPDYM"/>
<dbReference type="OrthoDB" id="5817230at2759"/>
<dbReference type="PAN-GO" id="P19087">
    <property type="GO annotations" value="8 GO annotations based on evolutionary models"/>
</dbReference>
<dbReference type="PhylomeDB" id="P19087"/>
<dbReference type="TreeFam" id="TF300673"/>
<dbReference type="PathwayCommons" id="P19087"/>
<dbReference type="Reactome" id="R-HSA-4086398">
    <property type="pathway name" value="Ca2+ pathway"/>
</dbReference>
<dbReference type="Reactome" id="R-HSA-418594">
    <property type="pathway name" value="G alpha (i) signalling events"/>
</dbReference>
<dbReference type="SignaLink" id="P19087"/>
<dbReference type="SIGNOR" id="P19087"/>
<dbReference type="BioGRID-ORCS" id="2780">
    <property type="hits" value="12 hits in 1142 CRISPR screens"/>
</dbReference>
<dbReference type="ChiTaRS" id="GNAT2">
    <property type="organism name" value="human"/>
</dbReference>
<dbReference type="GeneWiki" id="GNAT2"/>
<dbReference type="GenomeRNAi" id="2780"/>
<dbReference type="Pharos" id="P19087">
    <property type="development level" value="Tbio"/>
</dbReference>
<dbReference type="PRO" id="PR:P19087"/>
<dbReference type="Proteomes" id="UP000005640">
    <property type="component" value="Chromosome 1"/>
</dbReference>
<dbReference type="RNAct" id="P19087">
    <property type="molecule type" value="protein"/>
</dbReference>
<dbReference type="Bgee" id="ENSG00000134183">
    <property type="expression patterns" value="Expressed in oocyte and 103 other cell types or tissues"/>
</dbReference>
<dbReference type="ExpressionAtlas" id="P19087">
    <property type="expression patterns" value="baseline and differential"/>
</dbReference>
<dbReference type="GO" id="GO:0005737">
    <property type="term" value="C:cytoplasm"/>
    <property type="evidence" value="ECO:0000318"/>
    <property type="project" value="GO_Central"/>
</dbReference>
<dbReference type="GO" id="GO:0005834">
    <property type="term" value="C:heterotrimeric G-protein complex"/>
    <property type="evidence" value="ECO:0000318"/>
    <property type="project" value="GO_Central"/>
</dbReference>
<dbReference type="GO" id="GO:0001917">
    <property type="term" value="C:photoreceptor inner segment"/>
    <property type="evidence" value="ECO:0000314"/>
    <property type="project" value="UniProtKB"/>
</dbReference>
<dbReference type="GO" id="GO:0001750">
    <property type="term" value="C:photoreceptor outer segment"/>
    <property type="evidence" value="ECO:0000314"/>
    <property type="project" value="UniProtKB"/>
</dbReference>
<dbReference type="GO" id="GO:0042622">
    <property type="term" value="C:photoreceptor outer segment membrane"/>
    <property type="evidence" value="ECO:0000250"/>
    <property type="project" value="UniProtKB"/>
</dbReference>
<dbReference type="GO" id="GO:0005886">
    <property type="term" value="C:plasma membrane"/>
    <property type="evidence" value="ECO:0000304"/>
    <property type="project" value="Reactome"/>
</dbReference>
<dbReference type="GO" id="GO:0045202">
    <property type="term" value="C:synapse"/>
    <property type="evidence" value="ECO:0007669"/>
    <property type="project" value="Ensembl"/>
</dbReference>
<dbReference type="GO" id="GO:0008020">
    <property type="term" value="F:G protein-coupled photoreceptor activity"/>
    <property type="evidence" value="ECO:0000303"/>
    <property type="project" value="UniProtKB"/>
</dbReference>
<dbReference type="GO" id="GO:0001664">
    <property type="term" value="F:G protein-coupled receptor binding"/>
    <property type="evidence" value="ECO:0000318"/>
    <property type="project" value="GO_Central"/>
</dbReference>
<dbReference type="GO" id="GO:0031683">
    <property type="term" value="F:G-protein beta/gamma-subunit complex binding"/>
    <property type="evidence" value="ECO:0000318"/>
    <property type="project" value="GO_Central"/>
</dbReference>
<dbReference type="GO" id="GO:0005525">
    <property type="term" value="F:GTP binding"/>
    <property type="evidence" value="ECO:0000303"/>
    <property type="project" value="UniProtKB"/>
</dbReference>
<dbReference type="GO" id="GO:0003924">
    <property type="term" value="F:GTPase activity"/>
    <property type="evidence" value="ECO:0000318"/>
    <property type="project" value="GO_Central"/>
</dbReference>
<dbReference type="GO" id="GO:0046872">
    <property type="term" value="F:metal ion binding"/>
    <property type="evidence" value="ECO:0007669"/>
    <property type="project" value="UniProtKB-KW"/>
</dbReference>
<dbReference type="GO" id="GO:0007188">
    <property type="term" value="P:adenylate cyclase-modulating G protein-coupled receptor signaling pathway"/>
    <property type="evidence" value="ECO:0000318"/>
    <property type="project" value="GO_Central"/>
</dbReference>
<dbReference type="GO" id="GO:0120302">
    <property type="term" value="P:background adaptation"/>
    <property type="evidence" value="ECO:0007669"/>
    <property type="project" value="Ensembl"/>
</dbReference>
<dbReference type="GO" id="GO:0000902">
    <property type="term" value="P:cell morphogenesis"/>
    <property type="evidence" value="ECO:0007669"/>
    <property type="project" value="Ensembl"/>
</dbReference>
<dbReference type="GO" id="GO:1904390">
    <property type="term" value="P:cone retinal bipolar cell differentiation"/>
    <property type="evidence" value="ECO:0007669"/>
    <property type="project" value="Ensembl"/>
</dbReference>
<dbReference type="GO" id="GO:0001580">
    <property type="term" value="P:detection of chemical stimulus involved in sensory perception of bitter taste"/>
    <property type="evidence" value="ECO:0000318"/>
    <property type="project" value="GO_Central"/>
</dbReference>
<dbReference type="GO" id="GO:0050908">
    <property type="term" value="P:detection of light stimulus involved in visual perception"/>
    <property type="evidence" value="ECO:0000315"/>
    <property type="project" value="UniProtKB"/>
</dbReference>
<dbReference type="GO" id="GO:0042417">
    <property type="term" value="P:dopamine metabolic process"/>
    <property type="evidence" value="ECO:0007669"/>
    <property type="project" value="Ensembl"/>
</dbReference>
<dbReference type="GO" id="GO:0007186">
    <property type="term" value="P:G protein-coupled receptor signaling pathway"/>
    <property type="evidence" value="ECO:0000303"/>
    <property type="project" value="UniProtKB"/>
</dbReference>
<dbReference type="GO" id="GO:0010467">
    <property type="term" value="P:gene expression"/>
    <property type="evidence" value="ECO:0007669"/>
    <property type="project" value="Ensembl"/>
</dbReference>
<dbReference type="GO" id="GO:0048877">
    <property type="term" value="P:homeostasis of number of retina cells"/>
    <property type="evidence" value="ECO:0007669"/>
    <property type="project" value="Ensembl"/>
</dbReference>
<dbReference type="GO" id="GO:0051938">
    <property type="term" value="P:L-glutamate import"/>
    <property type="evidence" value="ECO:0007669"/>
    <property type="project" value="Ensembl"/>
</dbReference>
<dbReference type="GO" id="GO:0097719">
    <property type="term" value="P:neural tissue regeneration"/>
    <property type="evidence" value="ECO:0007669"/>
    <property type="project" value="Ensembl"/>
</dbReference>
<dbReference type="GO" id="GO:0007602">
    <property type="term" value="P:phototransduction"/>
    <property type="evidence" value="ECO:0000303"/>
    <property type="project" value="UniProtKB"/>
</dbReference>
<dbReference type="GO" id="GO:0007204">
    <property type="term" value="P:positive regulation of cytosolic calcium ion concentration"/>
    <property type="evidence" value="ECO:0007669"/>
    <property type="project" value="Ensembl"/>
</dbReference>
<dbReference type="GO" id="GO:0008104">
    <property type="term" value="P:protein localization"/>
    <property type="evidence" value="ECO:0007669"/>
    <property type="project" value="Ensembl"/>
</dbReference>
<dbReference type="GO" id="GO:0150103">
    <property type="term" value="P:reactive gliosis"/>
    <property type="evidence" value="ECO:0007669"/>
    <property type="project" value="Ensembl"/>
</dbReference>
<dbReference type="GO" id="GO:0009411">
    <property type="term" value="P:response to UV"/>
    <property type="evidence" value="ECO:0007669"/>
    <property type="project" value="Ensembl"/>
</dbReference>
<dbReference type="GO" id="GO:0046549">
    <property type="term" value="P:retinal cone cell development"/>
    <property type="evidence" value="ECO:0007669"/>
    <property type="project" value="Ensembl"/>
</dbReference>
<dbReference type="GO" id="GO:0060221">
    <property type="term" value="P:retinal rod cell differentiation"/>
    <property type="evidence" value="ECO:0007669"/>
    <property type="project" value="Ensembl"/>
</dbReference>
<dbReference type="GO" id="GO:0048771">
    <property type="term" value="P:tissue remodeling"/>
    <property type="evidence" value="ECO:0007669"/>
    <property type="project" value="Ensembl"/>
</dbReference>
<dbReference type="GO" id="GO:0007632">
    <property type="term" value="P:visual behavior"/>
    <property type="evidence" value="ECO:0007669"/>
    <property type="project" value="Ensembl"/>
</dbReference>
<dbReference type="GO" id="GO:0007601">
    <property type="term" value="P:visual perception"/>
    <property type="evidence" value="ECO:0000303"/>
    <property type="project" value="UniProtKB"/>
</dbReference>
<dbReference type="CDD" id="cd00066">
    <property type="entry name" value="G-alpha"/>
    <property type="match status" value="1"/>
</dbReference>
<dbReference type="FunFam" id="1.10.400.10:FF:000001">
    <property type="entry name" value="Guanine nucleotide-binding protein G(I) subunit alpha"/>
    <property type="match status" value="1"/>
</dbReference>
<dbReference type="FunFam" id="3.40.50.300:FF:000720">
    <property type="entry name" value="Guanine nucleotide-binding protein G(k) subunit alpha"/>
    <property type="match status" value="1"/>
</dbReference>
<dbReference type="FunFam" id="3.40.50.300:FF:000256">
    <property type="entry name" value="Guanine nucleotide-binding protein G(t) subunit alpha"/>
    <property type="match status" value="1"/>
</dbReference>
<dbReference type="Gene3D" id="1.10.400.10">
    <property type="entry name" value="GI Alpha 1, domain 2-like"/>
    <property type="match status" value="1"/>
</dbReference>
<dbReference type="Gene3D" id="3.40.50.300">
    <property type="entry name" value="P-loop containing nucleotide triphosphate hydrolases"/>
    <property type="match status" value="1"/>
</dbReference>
<dbReference type="InterPro" id="IPR001408">
    <property type="entry name" value="Gprotein_alpha_I"/>
</dbReference>
<dbReference type="InterPro" id="IPR001019">
    <property type="entry name" value="Gprotein_alpha_su"/>
</dbReference>
<dbReference type="InterPro" id="IPR011025">
    <property type="entry name" value="GproteinA_insert"/>
</dbReference>
<dbReference type="InterPro" id="IPR027417">
    <property type="entry name" value="P-loop_NTPase"/>
</dbReference>
<dbReference type="PANTHER" id="PTHR10218">
    <property type="entry name" value="GTP-BINDING PROTEIN ALPHA SUBUNIT"/>
    <property type="match status" value="1"/>
</dbReference>
<dbReference type="PANTHER" id="PTHR10218:SF68">
    <property type="entry name" value="GUANINE NUCLEOTIDE-BINDING PROTEIN G(T) SUBUNIT ALPHA-2"/>
    <property type="match status" value="1"/>
</dbReference>
<dbReference type="Pfam" id="PF00503">
    <property type="entry name" value="G-alpha"/>
    <property type="match status" value="1"/>
</dbReference>
<dbReference type="PRINTS" id="PR00318">
    <property type="entry name" value="GPROTEINA"/>
</dbReference>
<dbReference type="PRINTS" id="PR00441">
    <property type="entry name" value="GPROTEINAI"/>
</dbReference>
<dbReference type="SMART" id="SM00275">
    <property type="entry name" value="G_alpha"/>
    <property type="match status" value="1"/>
</dbReference>
<dbReference type="SUPFAM" id="SSF52540">
    <property type="entry name" value="P-loop containing nucleoside triphosphate hydrolases"/>
    <property type="match status" value="1"/>
</dbReference>
<dbReference type="SUPFAM" id="SSF47895">
    <property type="entry name" value="Transducin (alpha subunit), insertion domain"/>
    <property type="match status" value="1"/>
</dbReference>
<dbReference type="PROSITE" id="PS51882">
    <property type="entry name" value="G_ALPHA"/>
    <property type="match status" value="1"/>
</dbReference>
<reference key="1">
    <citation type="journal article" date="1989" name="Neuron">
        <title>Alpha transducin is present in blue-, green-, and red-sensitive cone photoreceptors in the human retina.</title>
        <authorList>
            <person name="Lerea C.L."/>
            <person name="Bunt-Milam A.H."/>
            <person name="Hurley J.B."/>
        </authorList>
    </citation>
    <scope>NUCLEOTIDE SEQUENCE [MRNA]</scope>
    <source>
        <tissue>Retina</tissue>
    </source>
</reference>
<reference key="2">
    <citation type="journal article" date="1991" name="FEBS Lett.">
        <title>Molecular cloning and sequence analysis of cDNA and genomic DNA for the human cone transducin alpha subunit.</title>
        <authorList>
            <person name="Kubo M."/>
            <person name="Hirano T."/>
            <person name="Kakinuma M."/>
        </authorList>
    </citation>
    <scope>NUCLEOTIDE SEQUENCE [GENOMIC DNA / MRNA]</scope>
</reference>
<reference key="3">
    <citation type="journal article" date="1993" name="Genomics">
        <title>Characterization of the gene encoding human cone transducin alpha-subunit (GNAT2).</title>
        <authorList>
            <person name="Morris A.T."/>
            <person name="Fong S."/>
        </authorList>
    </citation>
    <scope>NUCLEOTIDE SEQUENCE [GENOMIC DNA]</scope>
</reference>
<reference key="4">
    <citation type="submission" date="2002-03" db="EMBL/GenBank/DDBJ databases">
        <title>cDNA clones of human proteins involved in signal transduction sequenced by the Guthrie cDNA resource center (www.cdna.org).</title>
        <authorList>
            <person name="Puhl H.L. III"/>
            <person name="Ikeda S.R."/>
            <person name="Aronstam R.S."/>
        </authorList>
    </citation>
    <scope>NUCLEOTIDE SEQUENCE [LARGE SCALE MRNA]</scope>
</reference>
<reference key="5">
    <citation type="journal article" date="2004" name="Genome Res.">
        <title>The status, quality, and expansion of the NIH full-length cDNA project: the Mammalian Gene Collection (MGC).</title>
        <authorList>
            <consortium name="The MGC Project Team"/>
        </authorList>
    </citation>
    <scope>NUCLEOTIDE SEQUENCE [LARGE SCALE MRNA]</scope>
    <source>
        <tissue>Eye</tissue>
    </source>
</reference>
<reference key="6">
    <citation type="journal article" date="2002" name="Am. J. Hum. Genet.">
        <title>Mutations in the cone photoreceptor G-protein alpha-subunit gene GNAT2 in patients with achromatopsia.</title>
        <authorList>
            <person name="Kohl S."/>
            <person name="Baumann B."/>
            <person name="Rosenberg T."/>
            <person name="Kellner U."/>
            <person name="Lorenz B."/>
            <person name="Vadala M."/>
            <person name="Jacobson S.G."/>
            <person name="Wissinger B."/>
        </authorList>
    </citation>
    <scope>INVOLVEMENT IN ACHM4</scope>
</reference>
<reference key="7">
    <citation type="journal article" date="2005" name="Hum. Mutat.">
        <title>Cone cGMP-gated channel mutations and clinical findings in patients with achromatopsia, macular degeneration, and other hereditary cone diseases.</title>
        <authorList>
            <person name="Nishiguchi K.M."/>
            <person name="Sandberg M.A."/>
            <person name="Gorji N."/>
            <person name="Berson E.L."/>
            <person name="Dryja T.P."/>
        </authorList>
    </citation>
    <scope>VARIANTS ILE-107 AND MET-124</scope>
</reference>
<accession>P19087</accession>